<keyword id="KW-0067">ATP-binding</keyword>
<keyword id="KW-0963">Cytoplasm</keyword>
<keyword id="KW-0227">DNA damage</keyword>
<keyword id="KW-0233">DNA recombination</keyword>
<keyword id="KW-0234">DNA repair</keyword>
<keyword id="KW-0238">DNA-binding</keyword>
<keyword id="KW-0547">Nucleotide-binding</keyword>
<keyword id="KW-0742">SOS response</keyword>
<accession>B7H1V4</accession>
<reference key="1">
    <citation type="journal article" date="2008" name="J. Bacteriol.">
        <title>Comparative genome sequence analysis of multidrug-resistant Acinetobacter baumannii.</title>
        <authorList>
            <person name="Adams M.D."/>
            <person name="Goglin K."/>
            <person name="Molyneaux N."/>
            <person name="Hujer K.M."/>
            <person name="Lavender H."/>
            <person name="Jamison J.J."/>
            <person name="MacDonald I.J."/>
            <person name="Martin K.M."/>
            <person name="Russo T."/>
            <person name="Campagnari A.A."/>
            <person name="Hujer A.M."/>
            <person name="Bonomo R.A."/>
            <person name="Gill S.R."/>
        </authorList>
    </citation>
    <scope>NUCLEOTIDE SEQUENCE [LARGE SCALE GENOMIC DNA]</scope>
    <source>
        <strain>AB307-0294</strain>
    </source>
</reference>
<organism>
    <name type="scientific">Acinetobacter baumannii (strain AB307-0294)</name>
    <dbReference type="NCBI Taxonomy" id="557600"/>
    <lineage>
        <taxon>Bacteria</taxon>
        <taxon>Pseudomonadati</taxon>
        <taxon>Pseudomonadota</taxon>
        <taxon>Gammaproteobacteria</taxon>
        <taxon>Moraxellales</taxon>
        <taxon>Moraxellaceae</taxon>
        <taxon>Acinetobacter</taxon>
        <taxon>Acinetobacter calcoaceticus/baumannii complex</taxon>
    </lineage>
</organism>
<dbReference type="EMBL" id="CP001172">
    <property type="protein sequence ID" value="ACJ58159.1"/>
    <property type="molecule type" value="Genomic_DNA"/>
</dbReference>
<dbReference type="RefSeq" id="WP_000344169.1">
    <property type="nucleotide sequence ID" value="NZ_CP001172.1"/>
</dbReference>
<dbReference type="SMR" id="B7H1V4"/>
<dbReference type="GeneID" id="92894223"/>
<dbReference type="HOGENOM" id="CLU_040469_3_2_6"/>
<dbReference type="Proteomes" id="UP000006924">
    <property type="component" value="Chromosome"/>
</dbReference>
<dbReference type="GO" id="GO:0005829">
    <property type="term" value="C:cytosol"/>
    <property type="evidence" value="ECO:0007669"/>
    <property type="project" value="TreeGrafter"/>
</dbReference>
<dbReference type="GO" id="GO:0005524">
    <property type="term" value="F:ATP binding"/>
    <property type="evidence" value="ECO:0007669"/>
    <property type="project" value="UniProtKB-UniRule"/>
</dbReference>
<dbReference type="GO" id="GO:0016887">
    <property type="term" value="F:ATP hydrolysis activity"/>
    <property type="evidence" value="ECO:0007669"/>
    <property type="project" value="InterPro"/>
</dbReference>
<dbReference type="GO" id="GO:0140664">
    <property type="term" value="F:ATP-dependent DNA damage sensor activity"/>
    <property type="evidence" value="ECO:0007669"/>
    <property type="project" value="InterPro"/>
</dbReference>
<dbReference type="GO" id="GO:0003684">
    <property type="term" value="F:damaged DNA binding"/>
    <property type="evidence" value="ECO:0007669"/>
    <property type="project" value="UniProtKB-UniRule"/>
</dbReference>
<dbReference type="GO" id="GO:0003697">
    <property type="term" value="F:single-stranded DNA binding"/>
    <property type="evidence" value="ECO:0007669"/>
    <property type="project" value="UniProtKB-UniRule"/>
</dbReference>
<dbReference type="GO" id="GO:0006310">
    <property type="term" value="P:DNA recombination"/>
    <property type="evidence" value="ECO:0007669"/>
    <property type="project" value="UniProtKB-UniRule"/>
</dbReference>
<dbReference type="GO" id="GO:0006281">
    <property type="term" value="P:DNA repair"/>
    <property type="evidence" value="ECO:0007669"/>
    <property type="project" value="UniProtKB-UniRule"/>
</dbReference>
<dbReference type="GO" id="GO:0009432">
    <property type="term" value="P:SOS response"/>
    <property type="evidence" value="ECO:0007669"/>
    <property type="project" value="UniProtKB-UniRule"/>
</dbReference>
<dbReference type="CDD" id="cd00983">
    <property type="entry name" value="RecA"/>
    <property type="match status" value="1"/>
</dbReference>
<dbReference type="FunFam" id="3.40.50.300:FF:000087">
    <property type="entry name" value="Recombinase RecA"/>
    <property type="match status" value="1"/>
</dbReference>
<dbReference type="Gene3D" id="3.40.50.300">
    <property type="entry name" value="P-loop containing nucleotide triphosphate hydrolases"/>
    <property type="match status" value="1"/>
</dbReference>
<dbReference type="HAMAP" id="MF_00268">
    <property type="entry name" value="RecA"/>
    <property type="match status" value="1"/>
</dbReference>
<dbReference type="InterPro" id="IPR003593">
    <property type="entry name" value="AAA+_ATPase"/>
</dbReference>
<dbReference type="InterPro" id="IPR013765">
    <property type="entry name" value="DNA_recomb/repair_RecA"/>
</dbReference>
<dbReference type="InterPro" id="IPR020584">
    <property type="entry name" value="DNA_recomb/repair_RecA_CS"/>
</dbReference>
<dbReference type="InterPro" id="IPR027417">
    <property type="entry name" value="P-loop_NTPase"/>
</dbReference>
<dbReference type="InterPro" id="IPR049261">
    <property type="entry name" value="RecA-like_C"/>
</dbReference>
<dbReference type="InterPro" id="IPR049428">
    <property type="entry name" value="RecA-like_N"/>
</dbReference>
<dbReference type="InterPro" id="IPR020588">
    <property type="entry name" value="RecA_ATP-bd"/>
</dbReference>
<dbReference type="InterPro" id="IPR023400">
    <property type="entry name" value="RecA_C_sf"/>
</dbReference>
<dbReference type="InterPro" id="IPR020587">
    <property type="entry name" value="RecA_monomer-monomer_interface"/>
</dbReference>
<dbReference type="NCBIfam" id="TIGR02012">
    <property type="entry name" value="tigrfam_recA"/>
    <property type="match status" value="1"/>
</dbReference>
<dbReference type="PANTHER" id="PTHR45900:SF1">
    <property type="entry name" value="MITOCHONDRIAL DNA REPAIR PROTEIN RECA HOMOLOG-RELATED"/>
    <property type="match status" value="1"/>
</dbReference>
<dbReference type="PANTHER" id="PTHR45900">
    <property type="entry name" value="RECA"/>
    <property type="match status" value="1"/>
</dbReference>
<dbReference type="Pfam" id="PF00154">
    <property type="entry name" value="RecA"/>
    <property type="match status" value="1"/>
</dbReference>
<dbReference type="Pfam" id="PF21096">
    <property type="entry name" value="RecA_C"/>
    <property type="match status" value="1"/>
</dbReference>
<dbReference type="PRINTS" id="PR00142">
    <property type="entry name" value="RECA"/>
</dbReference>
<dbReference type="SMART" id="SM00382">
    <property type="entry name" value="AAA"/>
    <property type="match status" value="1"/>
</dbReference>
<dbReference type="SUPFAM" id="SSF52540">
    <property type="entry name" value="P-loop containing nucleoside triphosphate hydrolases"/>
    <property type="match status" value="1"/>
</dbReference>
<dbReference type="SUPFAM" id="SSF54752">
    <property type="entry name" value="RecA protein, C-terminal domain"/>
    <property type="match status" value="1"/>
</dbReference>
<dbReference type="PROSITE" id="PS00321">
    <property type="entry name" value="RECA_1"/>
    <property type="match status" value="1"/>
</dbReference>
<dbReference type="PROSITE" id="PS50162">
    <property type="entry name" value="RECA_2"/>
    <property type="match status" value="1"/>
</dbReference>
<dbReference type="PROSITE" id="PS50163">
    <property type="entry name" value="RECA_3"/>
    <property type="match status" value="1"/>
</dbReference>
<gene>
    <name evidence="1" type="primary">recA</name>
    <name type="ordered locus">ABBFA_001484</name>
</gene>
<feature type="chain" id="PRO_1000193283" description="Protein RecA">
    <location>
        <begin position="1"/>
        <end position="349"/>
    </location>
</feature>
<feature type="binding site" evidence="1">
    <location>
        <begin position="65"/>
        <end position="72"/>
    </location>
    <ligand>
        <name>ATP</name>
        <dbReference type="ChEBI" id="CHEBI:30616"/>
    </ligand>
</feature>
<evidence type="ECO:0000255" key="1">
    <source>
        <dbReference type="HAMAP-Rule" id="MF_00268"/>
    </source>
</evidence>
<protein>
    <recommendedName>
        <fullName evidence="1">Protein RecA</fullName>
    </recommendedName>
    <alternativeName>
        <fullName evidence="1">Recombinase A</fullName>
    </alternativeName>
</protein>
<name>RECA_ACIB3</name>
<proteinExistence type="inferred from homology"/>
<sequence length="349" mass="37891">MDENKSKALQAALSQIEKQFGKNTVMRLGDNTVQAVEAVSTGSLTLDIALGIGGLPKGRIIEIYGPESSGKTTMTLQAIAQCQKSGGTCAFIDAEHALDPQYARKLGVDIDNLLVSQPDNGEQALEIADMLVRSGAIDLIVVDSVAALTPKAEIEGEMGDSHMGLQARLMSQALRKITGNAKRSNCMVIFINQIRMKIGVMFGSPETTTGGNALKFYASVRLDIRRIGQVKEGDEIVGSETKVKVVKNKMAPPFKEAIFQILYGKGTNQLGELVDLAVQQDIVQKAGAWYSYQGNKIGQGKNNVIRYFEENTQIAEEIERNIREQLLTTGTNGAVQIEDEEEPDLLLES</sequence>
<comment type="function">
    <text evidence="1">Can catalyze the hydrolysis of ATP in the presence of single-stranded DNA, the ATP-dependent uptake of single-stranded DNA by duplex DNA, and the ATP-dependent hybridization of homologous single-stranded DNAs. It interacts with LexA causing its activation and leading to its autocatalytic cleavage.</text>
</comment>
<comment type="subcellular location">
    <subcellularLocation>
        <location evidence="1">Cytoplasm</location>
    </subcellularLocation>
</comment>
<comment type="similarity">
    <text evidence="1">Belongs to the RecA family.</text>
</comment>